<reference key="1">
    <citation type="journal article" date="2001" name="Nature">
        <title>Genome sequence of enterohaemorrhagic Escherichia coli O157:H7.</title>
        <authorList>
            <person name="Perna N.T."/>
            <person name="Plunkett G. III"/>
            <person name="Burland V."/>
            <person name="Mau B."/>
            <person name="Glasner J.D."/>
            <person name="Rose D.J."/>
            <person name="Mayhew G.F."/>
            <person name="Evans P.S."/>
            <person name="Gregor J."/>
            <person name="Kirkpatrick H.A."/>
            <person name="Posfai G."/>
            <person name="Hackett J."/>
            <person name="Klink S."/>
            <person name="Boutin A."/>
            <person name="Shao Y."/>
            <person name="Miller L."/>
            <person name="Grotbeck E.J."/>
            <person name="Davis N.W."/>
            <person name="Lim A."/>
            <person name="Dimalanta E.T."/>
            <person name="Potamousis K."/>
            <person name="Apodaca J."/>
            <person name="Anantharaman T.S."/>
            <person name="Lin J."/>
            <person name="Yen G."/>
            <person name="Schwartz D.C."/>
            <person name="Welch R.A."/>
            <person name="Blattner F.R."/>
        </authorList>
    </citation>
    <scope>NUCLEOTIDE SEQUENCE [LARGE SCALE GENOMIC DNA]</scope>
    <source>
        <strain>O157:H7 / EDL933 / ATCC 700927 / EHEC</strain>
    </source>
</reference>
<reference key="2">
    <citation type="journal article" date="2001" name="DNA Res.">
        <title>Complete genome sequence of enterohemorrhagic Escherichia coli O157:H7 and genomic comparison with a laboratory strain K-12.</title>
        <authorList>
            <person name="Hayashi T."/>
            <person name="Makino K."/>
            <person name="Ohnishi M."/>
            <person name="Kurokawa K."/>
            <person name="Ishii K."/>
            <person name="Yokoyama K."/>
            <person name="Han C.-G."/>
            <person name="Ohtsubo E."/>
            <person name="Nakayama K."/>
            <person name="Murata T."/>
            <person name="Tanaka M."/>
            <person name="Tobe T."/>
            <person name="Iida T."/>
            <person name="Takami H."/>
            <person name="Honda T."/>
            <person name="Sasakawa C."/>
            <person name="Ogasawara N."/>
            <person name="Yasunaga T."/>
            <person name="Kuhara S."/>
            <person name="Shiba T."/>
            <person name="Hattori M."/>
            <person name="Shinagawa H."/>
        </authorList>
    </citation>
    <scope>NUCLEOTIDE SEQUENCE [LARGE SCALE GENOMIC DNA]</scope>
    <source>
        <strain>O157:H7 / Sakai / RIMD 0509952 / EHEC</strain>
    </source>
</reference>
<dbReference type="EMBL" id="AE005174">
    <property type="protein sequence ID" value="AAG55240.1"/>
    <property type="molecule type" value="Genomic_DNA"/>
</dbReference>
<dbReference type="EMBL" id="BA000007">
    <property type="protein sequence ID" value="BAB34367.1"/>
    <property type="molecule type" value="Genomic_DNA"/>
</dbReference>
<dbReference type="PIR" id="D85597">
    <property type="entry name" value="D85597"/>
</dbReference>
<dbReference type="PIR" id="H90746">
    <property type="entry name" value="H90746"/>
</dbReference>
<dbReference type="RefSeq" id="NP_308971.1">
    <property type="nucleotide sequence ID" value="NC_002695.1"/>
</dbReference>
<dbReference type="RefSeq" id="WP_000464491.1">
    <property type="nucleotide sequence ID" value="NZ_VOAI01000006.1"/>
</dbReference>
<dbReference type="SMR" id="P0AE32"/>
<dbReference type="STRING" id="155864.Z1091"/>
<dbReference type="GeneID" id="75202487"/>
<dbReference type="GeneID" id="917725"/>
<dbReference type="KEGG" id="ece:Z1091"/>
<dbReference type="KEGG" id="ecs:ECs_0944"/>
<dbReference type="PATRIC" id="fig|386585.9.peg.1062"/>
<dbReference type="eggNOG" id="COG4160">
    <property type="taxonomic scope" value="Bacteria"/>
</dbReference>
<dbReference type="HOGENOM" id="CLU_019602_1_4_6"/>
<dbReference type="OMA" id="QWQSCQA"/>
<dbReference type="Proteomes" id="UP000000558">
    <property type="component" value="Chromosome"/>
</dbReference>
<dbReference type="Proteomes" id="UP000002519">
    <property type="component" value="Chromosome"/>
</dbReference>
<dbReference type="GO" id="GO:0043190">
    <property type="term" value="C:ATP-binding cassette (ABC) transporter complex"/>
    <property type="evidence" value="ECO:0007669"/>
    <property type="project" value="InterPro"/>
</dbReference>
<dbReference type="GO" id="GO:0022857">
    <property type="term" value="F:transmembrane transporter activity"/>
    <property type="evidence" value="ECO:0007669"/>
    <property type="project" value="InterPro"/>
</dbReference>
<dbReference type="GO" id="GO:0006865">
    <property type="term" value="P:amino acid transport"/>
    <property type="evidence" value="ECO:0007669"/>
    <property type="project" value="UniProtKB-KW"/>
</dbReference>
<dbReference type="CDD" id="cd06261">
    <property type="entry name" value="TM_PBP2"/>
    <property type="match status" value="1"/>
</dbReference>
<dbReference type="FunFam" id="1.10.3720.10:FF:000017">
    <property type="entry name" value="Arginine ABC transporter permease protein ArtM"/>
    <property type="match status" value="1"/>
</dbReference>
<dbReference type="Gene3D" id="1.10.3720.10">
    <property type="entry name" value="MetI-like"/>
    <property type="match status" value="1"/>
</dbReference>
<dbReference type="InterPro" id="IPR010065">
    <property type="entry name" value="AA_ABC_transptr_permease_3TM"/>
</dbReference>
<dbReference type="InterPro" id="IPR043429">
    <property type="entry name" value="ArtM/GltK/GlnP/TcyL/YhdX-like"/>
</dbReference>
<dbReference type="InterPro" id="IPR000515">
    <property type="entry name" value="MetI-like"/>
</dbReference>
<dbReference type="InterPro" id="IPR035906">
    <property type="entry name" value="MetI-like_sf"/>
</dbReference>
<dbReference type="NCBIfam" id="TIGR01726">
    <property type="entry name" value="HEQRo_perm_3TM"/>
    <property type="match status" value="1"/>
</dbReference>
<dbReference type="NCBIfam" id="NF008336">
    <property type="entry name" value="PRK11122.1"/>
    <property type="match status" value="1"/>
</dbReference>
<dbReference type="PANTHER" id="PTHR30614:SF10">
    <property type="entry name" value="ARGININE ABC TRANSPORTER PERMEASE PROTEIN ARTM"/>
    <property type="match status" value="1"/>
</dbReference>
<dbReference type="PANTHER" id="PTHR30614">
    <property type="entry name" value="MEMBRANE COMPONENT OF AMINO ACID ABC TRANSPORTER"/>
    <property type="match status" value="1"/>
</dbReference>
<dbReference type="Pfam" id="PF00528">
    <property type="entry name" value="BPD_transp_1"/>
    <property type="match status" value="1"/>
</dbReference>
<dbReference type="SUPFAM" id="SSF161098">
    <property type="entry name" value="MetI-like"/>
    <property type="match status" value="1"/>
</dbReference>
<dbReference type="PROSITE" id="PS50928">
    <property type="entry name" value="ABC_TM1"/>
    <property type="match status" value="1"/>
</dbReference>
<comment type="function">
    <text evidence="1">Part of the ABC transporter complex ArtPIQMJ involved in arginine transport. Probably responsible for the translocation of the substrate across the membrane (By similarity).</text>
</comment>
<comment type="subunit">
    <text evidence="1">The complex is composed of two ATP-binding proteins (ArtP), two transmembrane proteins (ArtM and ArtQ) and two solute-binding proteins (ArtJ and ArtI).</text>
</comment>
<comment type="subcellular location">
    <subcellularLocation>
        <location evidence="1">Cell inner membrane</location>
        <topology evidence="3">Multi-pass membrane protein</topology>
    </subcellularLocation>
</comment>
<comment type="similarity">
    <text evidence="4">Belongs to the binding-protein-dependent transport system permease family. HisMQ subfamily.</text>
</comment>
<keyword id="KW-0029">Amino-acid transport</keyword>
<keyword id="KW-0997">Cell inner membrane</keyword>
<keyword id="KW-1003">Cell membrane</keyword>
<keyword id="KW-0472">Membrane</keyword>
<keyword id="KW-1185">Reference proteome</keyword>
<keyword id="KW-0812">Transmembrane</keyword>
<keyword id="KW-1133">Transmembrane helix</keyword>
<keyword id="KW-0813">Transport</keyword>
<feature type="chain" id="PRO_0000059958" description="Arginine ABC transporter permease protein ArtM">
    <location>
        <begin position="1"/>
        <end position="222"/>
    </location>
</feature>
<feature type="topological domain" description="Periplasmic" evidence="2">
    <location>
        <begin position="1"/>
        <end position="15"/>
    </location>
</feature>
<feature type="transmembrane region" description="Helical" evidence="3">
    <location>
        <begin position="16"/>
        <end position="36"/>
    </location>
</feature>
<feature type="topological domain" description="Cytoplasmic" evidence="2">
    <location>
        <begin position="37"/>
        <end position="49"/>
    </location>
</feature>
<feature type="transmembrane region" description="Helical" evidence="3">
    <location>
        <begin position="50"/>
        <end position="70"/>
    </location>
</feature>
<feature type="topological domain" description="Periplasmic" evidence="2">
    <location>
        <begin position="71"/>
        <end position="79"/>
    </location>
</feature>
<feature type="transmembrane region" description="Helical" evidence="3">
    <location>
        <begin position="80"/>
        <end position="100"/>
    </location>
</feature>
<feature type="topological domain" description="Cytoplasmic" evidence="2">
    <location>
        <begin position="101"/>
        <end position="154"/>
    </location>
</feature>
<feature type="transmembrane region" description="Helical" evidence="3">
    <location>
        <begin position="155"/>
        <end position="175"/>
    </location>
</feature>
<feature type="topological domain" description="Periplasmic" evidence="2">
    <location>
        <begin position="176"/>
        <end position="186"/>
    </location>
</feature>
<feature type="transmembrane region" description="Helical" evidence="3">
    <location>
        <begin position="187"/>
        <end position="207"/>
    </location>
</feature>
<feature type="topological domain" description="Cytoplasmic" evidence="2">
    <location>
        <begin position="208"/>
        <end position="222"/>
    </location>
</feature>
<feature type="domain" description="ABC transmembrane type-1" evidence="3">
    <location>
        <begin position="12"/>
        <end position="208"/>
    </location>
</feature>
<protein>
    <recommendedName>
        <fullName>Arginine ABC transporter permease protein ArtM</fullName>
    </recommendedName>
</protein>
<organism>
    <name type="scientific">Escherichia coli O157:H7</name>
    <dbReference type="NCBI Taxonomy" id="83334"/>
    <lineage>
        <taxon>Bacteria</taxon>
        <taxon>Pseudomonadati</taxon>
        <taxon>Pseudomonadota</taxon>
        <taxon>Gammaproteobacteria</taxon>
        <taxon>Enterobacterales</taxon>
        <taxon>Enterobacteriaceae</taxon>
        <taxon>Escherichia</taxon>
    </lineage>
</organism>
<sequence length="222" mass="24914">MFEYLPELMKGLHTSLTLTVASLIVALILALIFTIILTLKTPVLVWLVRGYITLFTGTPLLVQIFLIYYGPGQFPTLQEYPALWHLLSEPWLCALIALSLNSAAYTTQLFYGAIRAIPEGQWQSCSALGMSKKDTLAILLPYAFKRSLSSYSNEVVLVFKSTSLAYTITLMEVMGYSQLLYGRTYDVMVFGAAGIIYLVVNGLLTLMMRLIERKALAFERRN</sequence>
<accession>P0AE32</accession>
<accession>P30862</accession>
<accession>P77311</accession>
<name>ARTM_ECO57</name>
<evidence type="ECO:0000250" key="1"/>
<evidence type="ECO:0000255" key="2"/>
<evidence type="ECO:0000255" key="3">
    <source>
        <dbReference type="PROSITE-ProRule" id="PRU00441"/>
    </source>
</evidence>
<evidence type="ECO:0000305" key="4"/>
<proteinExistence type="inferred from homology"/>
<gene>
    <name type="primary">artM</name>
    <name type="ordered locus">Z1091</name>
    <name type="ordered locus">ECs0944</name>
</gene>